<evidence type="ECO:0000250" key="1"/>
<evidence type="ECO:0000250" key="2">
    <source>
        <dbReference type="UniProtKB" id="P04637"/>
    </source>
</evidence>
<evidence type="ECO:0000256" key="3">
    <source>
        <dbReference type="SAM" id="MobiDB-lite"/>
    </source>
</evidence>
<evidence type="ECO:0000305" key="4"/>
<gene>
    <name type="primary">tp53</name>
    <name type="synonym">p53</name>
</gene>
<keyword id="KW-0010">Activator</keyword>
<keyword id="KW-0053">Apoptosis</keyword>
<keyword id="KW-0131">Cell cycle</keyword>
<keyword id="KW-0963">Cytoplasm</keyword>
<keyword id="KW-0238">DNA-binding</keyword>
<keyword id="KW-0479">Metal-binding</keyword>
<keyword id="KW-0539">Nucleus</keyword>
<keyword id="KW-0597">Phosphoprotein</keyword>
<keyword id="KW-0804">Transcription</keyword>
<keyword id="KW-0805">Transcription regulation</keyword>
<keyword id="KW-0043">Tumor suppressor</keyword>
<keyword id="KW-0862">Zinc</keyword>
<dbReference type="EMBL" id="Y08919">
    <property type="protein sequence ID" value="CAA70123.1"/>
    <property type="molecule type" value="mRNA"/>
</dbReference>
<dbReference type="SMR" id="O12946"/>
<dbReference type="GO" id="GO:0005737">
    <property type="term" value="C:cytoplasm"/>
    <property type="evidence" value="ECO:0000250"/>
    <property type="project" value="UniProtKB"/>
</dbReference>
<dbReference type="GO" id="GO:0005739">
    <property type="term" value="C:mitochondrion"/>
    <property type="evidence" value="ECO:0000250"/>
    <property type="project" value="UniProtKB"/>
</dbReference>
<dbReference type="GO" id="GO:0005634">
    <property type="term" value="C:nucleus"/>
    <property type="evidence" value="ECO:0000250"/>
    <property type="project" value="UniProtKB"/>
</dbReference>
<dbReference type="GO" id="GO:0000981">
    <property type="term" value="F:DNA-binding transcription factor activity, RNA polymerase II-specific"/>
    <property type="evidence" value="ECO:0007669"/>
    <property type="project" value="TreeGrafter"/>
</dbReference>
<dbReference type="GO" id="GO:0046872">
    <property type="term" value="F:metal ion binding"/>
    <property type="evidence" value="ECO:0007669"/>
    <property type="project" value="UniProtKB-KW"/>
</dbReference>
<dbReference type="GO" id="GO:0140693">
    <property type="term" value="F:molecular condensate scaffold activity"/>
    <property type="evidence" value="ECO:0000250"/>
    <property type="project" value="UniProtKB"/>
</dbReference>
<dbReference type="GO" id="GO:1990841">
    <property type="term" value="F:promoter-specific chromatin binding"/>
    <property type="evidence" value="ECO:0000250"/>
    <property type="project" value="UniProtKB"/>
</dbReference>
<dbReference type="GO" id="GO:0000978">
    <property type="term" value="F:RNA polymerase II cis-regulatory region sequence-specific DNA binding"/>
    <property type="evidence" value="ECO:0007669"/>
    <property type="project" value="TreeGrafter"/>
</dbReference>
<dbReference type="GO" id="GO:0006915">
    <property type="term" value="P:apoptotic process"/>
    <property type="evidence" value="ECO:0007669"/>
    <property type="project" value="UniProtKB-KW"/>
</dbReference>
<dbReference type="GO" id="GO:0006974">
    <property type="term" value="P:DNA damage response"/>
    <property type="evidence" value="ECO:0000250"/>
    <property type="project" value="UniProtKB"/>
</dbReference>
<dbReference type="GO" id="GO:0045944">
    <property type="term" value="P:positive regulation of transcription by RNA polymerase II"/>
    <property type="evidence" value="ECO:0000250"/>
    <property type="project" value="UniProtKB"/>
</dbReference>
<dbReference type="GO" id="GO:0051262">
    <property type="term" value="P:protein tetramerization"/>
    <property type="evidence" value="ECO:0007669"/>
    <property type="project" value="InterPro"/>
</dbReference>
<dbReference type="CDD" id="cd08367">
    <property type="entry name" value="P53"/>
    <property type="match status" value="1"/>
</dbReference>
<dbReference type="Gene3D" id="2.60.40.720">
    <property type="match status" value="1"/>
</dbReference>
<dbReference type="Gene3D" id="4.10.170.10">
    <property type="entry name" value="p53-like tetramerisation domain"/>
    <property type="match status" value="1"/>
</dbReference>
<dbReference type="InterPro" id="IPR008967">
    <property type="entry name" value="p53-like_TF_DNA-bd_sf"/>
</dbReference>
<dbReference type="InterPro" id="IPR012346">
    <property type="entry name" value="p53/RUNT-type_TF_DNA-bd_sf"/>
</dbReference>
<dbReference type="InterPro" id="IPR011615">
    <property type="entry name" value="p53_DNA-bd"/>
</dbReference>
<dbReference type="InterPro" id="IPR036674">
    <property type="entry name" value="p53_tetramer_sf"/>
</dbReference>
<dbReference type="InterPro" id="IPR010991">
    <property type="entry name" value="p53_tetrameristn"/>
</dbReference>
<dbReference type="InterPro" id="IPR002117">
    <property type="entry name" value="p53_tumour_suppressor"/>
</dbReference>
<dbReference type="PANTHER" id="PTHR11447">
    <property type="entry name" value="CELLULAR TUMOR ANTIGEN P53"/>
    <property type="match status" value="1"/>
</dbReference>
<dbReference type="PANTHER" id="PTHR11447:SF6">
    <property type="entry name" value="CELLULAR TUMOR ANTIGEN P53"/>
    <property type="match status" value="1"/>
</dbReference>
<dbReference type="Pfam" id="PF00870">
    <property type="entry name" value="P53"/>
    <property type="match status" value="1"/>
</dbReference>
<dbReference type="Pfam" id="PF07710">
    <property type="entry name" value="P53_tetramer"/>
    <property type="match status" value="1"/>
</dbReference>
<dbReference type="PRINTS" id="PR00386">
    <property type="entry name" value="P53SUPPRESSR"/>
</dbReference>
<dbReference type="SUPFAM" id="SSF47719">
    <property type="entry name" value="p53 tetramerization domain"/>
    <property type="match status" value="1"/>
</dbReference>
<dbReference type="SUPFAM" id="SSF49417">
    <property type="entry name" value="p53-like transcription factors"/>
    <property type="match status" value="1"/>
</dbReference>
<dbReference type="PROSITE" id="PS00348">
    <property type="entry name" value="P53"/>
    <property type="match status" value="1"/>
</dbReference>
<comment type="function">
    <text evidence="1">Multifunctional transcription factor that induces cell cycle arrest, DNA repair or apoptosis upon binding to its target DNA sequence. Acts as a tumor suppressor in many tumor types; induces growth arrest or apoptosis depending on the physiological circumstances and cell type. Negatively regulates cell division by controlling expression of a set of genes required for this process. One of the activated genes is an inhibitor of cyclin-dependent kinases. Apoptosis induction seems to be mediated either by stimulation of BAX and FAS antigen expression, or by repression of Bcl-2 expression (By similarity).</text>
</comment>
<comment type="cofactor">
    <cofactor evidence="1">
        <name>Zn(2+)</name>
        <dbReference type="ChEBI" id="CHEBI:29105"/>
    </cofactor>
    <text evidence="1">Binds 1 zinc ion per subunit.</text>
</comment>
<comment type="subunit">
    <text evidence="1">Binds DNA as a homotetramer.</text>
</comment>
<comment type="subcellular location">
    <subcellularLocation>
        <location evidence="1">Cytoplasm</location>
    </subcellularLocation>
    <subcellularLocation>
        <location evidence="1">Nucleus</location>
    </subcellularLocation>
</comment>
<comment type="domain">
    <text evidence="2">The N-terminal and C-terminal disordered regions undergo liquid-liquid phase separation (LLPS) following homotetramerization and activation. Post-translational modifications, such as phosphorylation or lactylation affect the ability to undergo LLPS.</text>
</comment>
<comment type="domain">
    <text evidence="2">The nuclear export signal acts as a transcriptional repression domain. The TADI and TADII motifs (residues 17 to 25 and 48 to 56) correspond both to 9aaTAD motifs which are transactivation domains present in a large number of yeast and animal transcription factors.</text>
</comment>
<comment type="similarity">
    <text evidence="4">Belongs to the p53 family.</text>
</comment>
<accession>O12946</accession>
<feature type="chain" id="PRO_0000185722" description="Cellular tumor antigen p53">
    <location>
        <begin position="1"/>
        <end position="366"/>
    </location>
</feature>
<feature type="DNA-binding region" evidence="1">
    <location>
        <begin position="80"/>
        <end position="267"/>
    </location>
</feature>
<feature type="region of interest" description="Transcription activation (acidic)">
    <location>
        <begin position="1"/>
        <end position="41"/>
    </location>
</feature>
<feature type="region of interest" description="Interaction with DNA" evidence="1">
    <location>
        <begin position="248"/>
        <end position="255"/>
    </location>
</feature>
<feature type="region of interest" description="Disordered" evidence="3">
    <location>
        <begin position="255"/>
        <end position="305"/>
    </location>
</feature>
<feature type="region of interest" description="Oligomerization">
    <location>
        <begin position="305"/>
        <end position="336"/>
    </location>
</feature>
<feature type="region of interest" description="Disordered" evidence="3">
    <location>
        <begin position="332"/>
        <end position="366"/>
    </location>
</feature>
<feature type="region of interest" description="Basic (repression of DNA-binding)">
    <location>
        <begin position="341"/>
        <end position="362"/>
    </location>
</feature>
<feature type="short sequence motif" description="Bipartite nuclear localization signal" evidence="1">
    <location>
        <begin position="275"/>
        <end position="295"/>
    </location>
</feature>
<feature type="short sequence motif" description="Nuclear export signal" evidence="1">
    <location>
        <begin position="319"/>
        <end position="330"/>
    </location>
</feature>
<feature type="compositionally biased region" description="Basic and acidic residues" evidence="3">
    <location>
        <begin position="255"/>
        <end position="264"/>
    </location>
</feature>
<feature type="compositionally biased region" description="Polar residues" evidence="3">
    <location>
        <begin position="280"/>
        <end position="292"/>
    </location>
</feature>
<feature type="binding site" evidence="1">
    <location>
        <position position="154"/>
    </location>
    <ligand>
        <name>Zn(2+)</name>
        <dbReference type="ChEBI" id="CHEBI:29105"/>
    </ligand>
</feature>
<feature type="binding site" evidence="1">
    <location>
        <position position="157"/>
    </location>
    <ligand>
        <name>Zn(2+)</name>
        <dbReference type="ChEBI" id="CHEBI:29105"/>
    </ligand>
</feature>
<feature type="binding site" evidence="1">
    <location>
        <position position="213"/>
    </location>
    <ligand>
        <name>Zn(2+)</name>
        <dbReference type="ChEBI" id="CHEBI:29105"/>
    </ligand>
</feature>
<feature type="binding site" evidence="1">
    <location>
        <position position="217"/>
    </location>
    <ligand>
        <name>Zn(2+)</name>
        <dbReference type="ChEBI" id="CHEBI:29105"/>
    </ligand>
</feature>
<feature type="site" description="Interaction with DNA" evidence="1">
    <location>
        <position position="98"/>
    </location>
</feature>
<sequence length="366" mass="40619">MMDEQGLDGMQILPGSQDSFSELWASVQTPSIATIAEEFDDHLGNLLQNGFDMNLFELPPEMVAKDSVTPPSSTVPVVTDYPGEYGFQLRFQKSGTAKSVTSTFSELLKKLYCQLAKTSPVEVLLSKEPPQGAVLRATAVYKKTEHVADVVRRCPHHQTEDTAEHRSHLIRLEGSQRALYFEDPHTKRQSVTVPYEPPQLGSETTAILLSFMCNSSCMGGMNRRQILTILTLETPDGLVLGRRCFEVRVCACPGRDRKTDEESSTKTPNGPKQTKKRKQAPSNSAPHTTTVMKSKSSSSAEEEDKEVFTVLVKGRERYEIIKKINEAFEGAAEKEKAKNKVAVKQELPVPSSGKRLVQRGERSDSD</sequence>
<name>P53_PLAFE</name>
<organism>
    <name type="scientific">Platichthys flesus</name>
    <name type="common">European flounder</name>
    <name type="synonym">Pleuronectes flesus</name>
    <dbReference type="NCBI Taxonomy" id="8260"/>
    <lineage>
        <taxon>Eukaryota</taxon>
        <taxon>Metazoa</taxon>
        <taxon>Chordata</taxon>
        <taxon>Craniata</taxon>
        <taxon>Vertebrata</taxon>
        <taxon>Euteleostomi</taxon>
        <taxon>Actinopterygii</taxon>
        <taxon>Neopterygii</taxon>
        <taxon>Teleostei</taxon>
        <taxon>Neoteleostei</taxon>
        <taxon>Acanthomorphata</taxon>
        <taxon>Carangaria</taxon>
        <taxon>Pleuronectiformes</taxon>
        <taxon>Pleuronectoidei</taxon>
        <taxon>Pleuronectidae</taxon>
        <taxon>Platichthys</taxon>
    </lineage>
</organism>
<proteinExistence type="evidence at transcript level"/>
<reference key="1">
    <citation type="journal article" date="1998" name="Comp. Biochem. Physiol.">
        <title>cDNA cloning and expression analysis of flounder p53 tumour suppressor gene.</title>
        <authorList>
            <person name="Cachot J."/>
            <person name="Galgani F."/>
            <person name="Vincent F."/>
        </authorList>
    </citation>
    <scope>NUCLEOTIDE SEQUENCE [MRNA]</scope>
</reference>
<protein>
    <recommendedName>
        <fullName>Cellular tumor antigen p53</fullName>
    </recommendedName>
    <alternativeName>
        <fullName>Tumor suppressor p53</fullName>
    </alternativeName>
</protein>